<feature type="chain" id="PRO_0000413972" description="Probable 1,4-alpha-glucan branching enzyme Rv3031">
    <location>
        <begin position="1"/>
        <end position="526"/>
    </location>
</feature>
<feature type="active site" description="Nucleophile" evidence="1">
    <location>
        <position position="205"/>
    </location>
</feature>
<feature type="active site" description="Proton donor" evidence="1">
    <location>
        <position position="344"/>
    </location>
</feature>
<feature type="binding site" evidence="1">
    <location>
        <position position="251"/>
    </location>
    <ligand>
        <name>substrate</name>
    </ligand>
</feature>
<feature type="binding site" evidence="1">
    <location>
        <position position="268"/>
    </location>
    <ligand>
        <name>substrate</name>
    </ligand>
</feature>
<feature type="binding site" evidence="1">
    <location>
        <position position="396"/>
    </location>
    <ligand>
        <name>substrate</name>
    </ligand>
</feature>
<feature type="binding site" evidence="1">
    <location>
        <position position="462"/>
    </location>
    <ligand>
        <name>substrate</name>
    </ligand>
</feature>
<comment type="function">
    <text evidence="2">Catalyzes the formation of branch points in alpha-glucans by cleavage of an alpha-1,4 glycosidic bond and subsequent transfer of the cleaved-off oligosaccharide to a new alpha-1,6 position (Probable). Is probably involved in the biosynthesis of 6-O-methylglucosyl lipopolysaccharides (MGLP).</text>
</comment>
<comment type="catalytic activity">
    <reaction>
        <text>Transfers a segment of a (1-&gt;4)-alpha-D-glucan chain to a primary hydroxy group in a similar glucan chain.</text>
        <dbReference type="EC" id="2.4.1.18"/>
    </reaction>
</comment>
<comment type="similarity">
    <text evidence="2">Belongs to the glycosyl hydrolase 57 family.</text>
</comment>
<proteinExistence type="evidence at protein level"/>
<sequence>MNTSASPVPGLFTLVLHTHLPWLAHHGRWPVGEEWLYQSWAAAYLPLLQVLAALADENRHRLITLGMTPVVNAQLDDPYCLNGVHHWLANWQLRAEEAASVRYARQSKSADYPSCTPEALRAFGIRECADAARALDNFATRWRHGGSPLLRGLIDAGTVELLGGPLAHPFQPLLAPRLREFALREGLADAQLRLAHRPKGIWAPECAYAPGMEVDYATAGVSHFMVDGPSLHGDTALGRPVGKTDVVAFGRDLQVSYRVWSPKSGYPGHAAYRDFHTYDHLTGLKPARVTGRNVPSEQKAPYDPERADRAVDVHVADFVDVVRNRLLSESERIGRPAHVIAAFDTELFGHWWYEGPTWLQRVLRALPAAGVRVGTLSDAIADGFVGDPVELPPSSWGSGKDWQVWSGAKVADLVQLNSEVVDTALTTIDKALAQTASLDGPLPRDHVADQILRETLLTVSSDWPFMVSKDSAADYARYRAHLHAHATREIAGALAAGRRDTARRLAEGWNRADGLFGALDARRLPK</sequence>
<gene>
    <name type="ordered locus">Rv3031</name>
</gene>
<evidence type="ECO:0000250" key="1"/>
<evidence type="ECO:0000305" key="2"/>
<reference key="1">
    <citation type="journal article" date="1998" name="Nature">
        <title>Deciphering the biology of Mycobacterium tuberculosis from the complete genome sequence.</title>
        <authorList>
            <person name="Cole S.T."/>
            <person name="Brosch R."/>
            <person name="Parkhill J."/>
            <person name="Garnier T."/>
            <person name="Churcher C.M."/>
            <person name="Harris D.E."/>
            <person name="Gordon S.V."/>
            <person name="Eiglmeier K."/>
            <person name="Gas S."/>
            <person name="Barry C.E. III"/>
            <person name="Tekaia F."/>
            <person name="Badcock K."/>
            <person name="Basham D."/>
            <person name="Brown D."/>
            <person name="Chillingworth T."/>
            <person name="Connor R."/>
            <person name="Davies R.M."/>
            <person name="Devlin K."/>
            <person name="Feltwell T."/>
            <person name="Gentles S."/>
            <person name="Hamlin N."/>
            <person name="Holroyd S."/>
            <person name="Hornsby T."/>
            <person name="Jagels K."/>
            <person name="Krogh A."/>
            <person name="McLean J."/>
            <person name="Moule S."/>
            <person name="Murphy L.D."/>
            <person name="Oliver S."/>
            <person name="Osborne J."/>
            <person name="Quail M.A."/>
            <person name="Rajandream M.A."/>
            <person name="Rogers J."/>
            <person name="Rutter S."/>
            <person name="Seeger K."/>
            <person name="Skelton S."/>
            <person name="Squares S."/>
            <person name="Squares R."/>
            <person name="Sulston J.E."/>
            <person name="Taylor K."/>
            <person name="Whitehead S."/>
            <person name="Barrell B.G."/>
        </authorList>
    </citation>
    <scope>NUCLEOTIDE SEQUENCE [LARGE SCALE GENOMIC DNA]</scope>
    <source>
        <strain>ATCC 25618 / H37Rv</strain>
    </source>
</reference>
<reference key="2">
    <citation type="journal article" date="2007" name="J. Biol. Chem.">
        <title>Genetic basis for the biosynthesis of methylglucose lipopolysaccharides in Mycobacterium tuberculosis.</title>
        <authorList>
            <person name="Stadthagen G."/>
            <person name="Sambou T."/>
            <person name="Guerin M."/>
            <person name="Barilone N."/>
            <person name="Boudou F."/>
            <person name="Kordulakova J."/>
            <person name="Charles P."/>
            <person name="Alzari P.M."/>
            <person name="Lemassu A."/>
            <person name="Daffe M."/>
            <person name="Puzo G."/>
            <person name="Gicquel B."/>
            <person name="Riviere M."/>
            <person name="Jackson M."/>
        </authorList>
    </citation>
    <scope>PROBABLE FUNCTION</scope>
    <source>
        <strain>ATCC 25618 / H37Rv</strain>
    </source>
</reference>
<reference key="3">
    <citation type="journal article" date="2011" name="Mol. Cell. Proteomics">
        <title>Proteogenomic analysis of Mycobacterium tuberculosis by high resolution mass spectrometry.</title>
        <authorList>
            <person name="Kelkar D.S."/>
            <person name="Kumar D."/>
            <person name="Kumar P."/>
            <person name="Balakrishnan L."/>
            <person name="Muthusamy B."/>
            <person name="Yadav A.K."/>
            <person name="Shrivastava P."/>
            <person name="Marimuthu A."/>
            <person name="Anand S."/>
            <person name="Sundaram H."/>
            <person name="Kingsbury R."/>
            <person name="Harsha H.C."/>
            <person name="Nair B."/>
            <person name="Prasad T.S."/>
            <person name="Chauhan D.S."/>
            <person name="Katoch K."/>
            <person name="Katoch V.M."/>
            <person name="Kumar P."/>
            <person name="Chaerkady R."/>
            <person name="Ramachandran S."/>
            <person name="Dash D."/>
            <person name="Pandey A."/>
        </authorList>
    </citation>
    <scope>IDENTIFICATION BY MASS SPECTROMETRY [LARGE SCALE ANALYSIS]</scope>
    <source>
        <strain>ATCC 25618 / H37Rv</strain>
    </source>
</reference>
<name>BE_MYCTU</name>
<organism>
    <name type="scientific">Mycobacterium tuberculosis (strain ATCC 25618 / H37Rv)</name>
    <dbReference type="NCBI Taxonomy" id="83332"/>
    <lineage>
        <taxon>Bacteria</taxon>
        <taxon>Bacillati</taxon>
        <taxon>Actinomycetota</taxon>
        <taxon>Actinomycetes</taxon>
        <taxon>Mycobacteriales</taxon>
        <taxon>Mycobacteriaceae</taxon>
        <taxon>Mycobacterium</taxon>
        <taxon>Mycobacterium tuberculosis complex</taxon>
    </lineage>
</organism>
<dbReference type="EC" id="2.4.1.18"/>
<dbReference type="EMBL" id="AL123456">
    <property type="protein sequence ID" value="CCP45839.1"/>
    <property type="molecule type" value="Genomic_DNA"/>
</dbReference>
<dbReference type="PIR" id="B70859">
    <property type="entry name" value="B70859"/>
</dbReference>
<dbReference type="RefSeq" id="NP_217547.1">
    <property type="nucleotide sequence ID" value="NC_000962.3"/>
</dbReference>
<dbReference type="RefSeq" id="WP_003899891.1">
    <property type="nucleotide sequence ID" value="NZ_NVQJ01000011.1"/>
</dbReference>
<dbReference type="SMR" id="P9WQ27"/>
<dbReference type="FunCoup" id="P9WQ27">
    <property type="interactions" value="23"/>
</dbReference>
<dbReference type="STRING" id="83332.Rv3031"/>
<dbReference type="PaxDb" id="83332-Rv3031"/>
<dbReference type="DNASU" id="888543"/>
<dbReference type="GeneID" id="888543"/>
<dbReference type="KEGG" id="mtu:Rv3031"/>
<dbReference type="KEGG" id="mtv:RVBD_3031"/>
<dbReference type="TubercuList" id="Rv3031"/>
<dbReference type="eggNOG" id="COG1543">
    <property type="taxonomic scope" value="Bacteria"/>
</dbReference>
<dbReference type="InParanoid" id="P9WQ27"/>
<dbReference type="OrthoDB" id="9803279at2"/>
<dbReference type="PhylomeDB" id="P9WQ27"/>
<dbReference type="Proteomes" id="UP000001584">
    <property type="component" value="Chromosome"/>
</dbReference>
<dbReference type="GO" id="GO:0005576">
    <property type="term" value="C:extracellular region"/>
    <property type="evidence" value="ECO:0007005"/>
    <property type="project" value="MTBBASE"/>
</dbReference>
<dbReference type="GO" id="GO:0005886">
    <property type="term" value="C:plasma membrane"/>
    <property type="evidence" value="ECO:0007005"/>
    <property type="project" value="MTBBASE"/>
</dbReference>
<dbReference type="GO" id="GO:0003844">
    <property type="term" value="F:1,4-alpha-glucan branching enzyme activity"/>
    <property type="evidence" value="ECO:0007669"/>
    <property type="project" value="UniProtKB-EC"/>
</dbReference>
<dbReference type="GO" id="GO:0030979">
    <property type="term" value="P:alpha-glucan biosynthetic process"/>
    <property type="evidence" value="ECO:0007669"/>
    <property type="project" value="InterPro"/>
</dbReference>
<dbReference type="FunFam" id="1.20.1430.10:FF:000001">
    <property type="entry name" value="1,4-alpha-glucan branching enzyme TK1436"/>
    <property type="match status" value="1"/>
</dbReference>
<dbReference type="FunFam" id="3.20.110.10:FF:000009">
    <property type="entry name" value="1,4-alpha-glucan branching enzyme TK1436"/>
    <property type="match status" value="1"/>
</dbReference>
<dbReference type="Gene3D" id="1.20.1430.10">
    <property type="entry name" value="Families 57/38 glycoside transferase, middle domain"/>
    <property type="match status" value="1"/>
</dbReference>
<dbReference type="Gene3D" id="3.20.110.10">
    <property type="entry name" value="Glycoside hydrolase 38, N terminal domain"/>
    <property type="match status" value="1"/>
</dbReference>
<dbReference type="InterPro" id="IPR037090">
    <property type="entry name" value="57_glycoside_trans_central"/>
</dbReference>
<dbReference type="InterPro" id="IPR015293">
    <property type="entry name" value="BE_C"/>
</dbReference>
<dbReference type="InterPro" id="IPR040042">
    <property type="entry name" value="Branching_enz_MT3115-like"/>
</dbReference>
<dbReference type="InterPro" id="IPR011330">
    <property type="entry name" value="Glyco_hydro/deAcase_b/a-brl"/>
</dbReference>
<dbReference type="InterPro" id="IPR027291">
    <property type="entry name" value="Glyco_hydro_38_N_sf"/>
</dbReference>
<dbReference type="InterPro" id="IPR028995">
    <property type="entry name" value="Glyco_hydro_57/38_cen_sf"/>
</dbReference>
<dbReference type="InterPro" id="IPR004300">
    <property type="entry name" value="Glyco_hydro_57_N"/>
</dbReference>
<dbReference type="PANTHER" id="PTHR41695">
    <property type="entry name" value="1,4-ALPHA-GLUCAN BRANCHING ENZYME RV3031-RELATED"/>
    <property type="match status" value="1"/>
</dbReference>
<dbReference type="PANTHER" id="PTHR41695:SF1">
    <property type="entry name" value="1,4-ALPHA-GLUCAN BRANCHING ENZYME TK1436"/>
    <property type="match status" value="1"/>
</dbReference>
<dbReference type="Pfam" id="PF09210">
    <property type="entry name" value="BE_C"/>
    <property type="match status" value="1"/>
</dbReference>
<dbReference type="Pfam" id="PF03065">
    <property type="entry name" value="Glyco_hydro_57"/>
    <property type="match status" value="1"/>
</dbReference>
<dbReference type="SUPFAM" id="SSF88688">
    <property type="entry name" value="Families 57/38 glycoside transferase middle domain"/>
    <property type="match status" value="1"/>
</dbReference>
<dbReference type="SUPFAM" id="SSF88713">
    <property type="entry name" value="Glycoside hydrolase/deacetylase"/>
    <property type="match status" value="1"/>
</dbReference>
<accession>P9WQ27</accession>
<accession>L0TE45</accession>
<accession>O53278</accession>
<accession>Q7D694</accession>
<keyword id="KW-0119">Carbohydrate metabolism</keyword>
<keyword id="KW-0328">Glycosyltransferase</keyword>
<keyword id="KW-1185">Reference proteome</keyword>
<keyword id="KW-0808">Transferase</keyword>
<protein>
    <recommendedName>
        <fullName>Probable 1,4-alpha-glucan branching enzyme Rv3031</fullName>
        <ecNumber>2.4.1.18</ecNumber>
    </recommendedName>
    <alternativeName>
        <fullName>1,4-alpha-D-glucan:1,4-alpha-D-glucan 6-glucosyl-transferase</fullName>
    </alternativeName>
    <alternativeName>
        <fullName>Alpha-(1-&gt;4)-glucan branching enzyme</fullName>
    </alternativeName>
    <alternativeName>
        <fullName>Branching enzyme</fullName>
        <shortName>BE</shortName>
    </alternativeName>
</protein>